<reference key="1">
    <citation type="journal article" date="2008" name="PLoS Genet.">
        <title>Genomic islands in the pathogenic filamentous fungus Aspergillus fumigatus.</title>
        <authorList>
            <person name="Fedorova N.D."/>
            <person name="Khaldi N."/>
            <person name="Joardar V.S."/>
            <person name="Maiti R."/>
            <person name="Amedeo P."/>
            <person name="Anderson M.J."/>
            <person name="Crabtree J."/>
            <person name="Silva J.C."/>
            <person name="Badger J.H."/>
            <person name="Albarraq A."/>
            <person name="Angiuoli S."/>
            <person name="Bussey H."/>
            <person name="Bowyer P."/>
            <person name="Cotty P.J."/>
            <person name="Dyer P.S."/>
            <person name="Egan A."/>
            <person name="Galens K."/>
            <person name="Fraser-Liggett C.M."/>
            <person name="Haas B.J."/>
            <person name="Inman J.M."/>
            <person name="Kent R."/>
            <person name="Lemieux S."/>
            <person name="Malavazi I."/>
            <person name="Orvis J."/>
            <person name="Roemer T."/>
            <person name="Ronning C.M."/>
            <person name="Sundaram J.P."/>
            <person name="Sutton G."/>
            <person name="Turner G."/>
            <person name="Venter J.C."/>
            <person name="White O.R."/>
            <person name="Whitty B.R."/>
            <person name="Youngman P."/>
            <person name="Wolfe K.H."/>
            <person name="Goldman G.H."/>
            <person name="Wortman J.R."/>
            <person name="Jiang B."/>
            <person name="Denning D.W."/>
            <person name="Nierman W.C."/>
        </authorList>
    </citation>
    <scope>NUCLEOTIDE SEQUENCE [LARGE SCALE GENOMIC DNA]</scope>
    <source>
        <strain>ATCC 1020 / DSM 3700 / CBS 544.65 / FGSC A1164 / JCM 1740 / NRRL 181 / WB 181</strain>
    </source>
</reference>
<comment type="function">
    <text evidence="1">Component of the Mediator complex, a coactivator involved in the regulated transcription of nearly all RNA polymerase II-dependent genes. Mediator functions as a bridge to convey information from gene-specific regulatory proteins to the basal RNA polymerase II transcription machinery. Mediator is recruited to promoters by direct interactions with regulatory proteins and serves as a scaffold for the assembly of a functional preinitiation complex with RNA polymerase II and the general transcription factors (By similarity).</text>
</comment>
<comment type="subunit">
    <text evidence="1">Component of the Mediator complex.</text>
</comment>
<comment type="subcellular location">
    <subcellularLocation>
        <location evidence="1">Nucleus</location>
    </subcellularLocation>
</comment>
<comment type="similarity">
    <text evidence="4">Belongs to the Mediator complex subunit 21 family.</text>
</comment>
<proteinExistence type="inferred from homology"/>
<gene>
    <name type="primary">srb7</name>
    <name type="synonym">med21</name>
    <name type="ORF">NFIA_088540</name>
</gene>
<accession>A1DHP1</accession>
<dbReference type="EMBL" id="DS027696">
    <property type="protein sequence ID" value="EAW18898.1"/>
    <property type="molecule type" value="Genomic_DNA"/>
</dbReference>
<dbReference type="RefSeq" id="XP_001260795.1">
    <property type="nucleotide sequence ID" value="XM_001260794.1"/>
</dbReference>
<dbReference type="SMR" id="A1DHP1"/>
<dbReference type="STRING" id="331117.A1DHP1"/>
<dbReference type="EnsemblFungi" id="EAW18898">
    <property type="protein sequence ID" value="EAW18898"/>
    <property type="gene ID" value="NFIA_088540"/>
</dbReference>
<dbReference type="GeneID" id="4587353"/>
<dbReference type="KEGG" id="nfi:NFIA_088540"/>
<dbReference type="VEuPathDB" id="FungiDB:NFIA_088540"/>
<dbReference type="eggNOG" id="KOG1510">
    <property type="taxonomic scope" value="Eukaryota"/>
</dbReference>
<dbReference type="HOGENOM" id="CLU_094271_0_1_1"/>
<dbReference type="OMA" id="LTTYHDH"/>
<dbReference type="OrthoDB" id="526653at2759"/>
<dbReference type="Proteomes" id="UP000006702">
    <property type="component" value="Unassembled WGS sequence"/>
</dbReference>
<dbReference type="GO" id="GO:0016592">
    <property type="term" value="C:mediator complex"/>
    <property type="evidence" value="ECO:0007669"/>
    <property type="project" value="InterPro"/>
</dbReference>
<dbReference type="GO" id="GO:0003712">
    <property type="term" value="F:transcription coregulator activity"/>
    <property type="evidence" value="ECO:0007669"/>
    <property type="project" value="TreeGrafter"/>
</dbReference>
<dbReference type="GO" id="GO:0006357">
    <property type="term" value="P:regulation of transcription by RNA polymerase II"/>
    <property type="evidence" value="ECO:0007669"/>
    <property type="project" value="TreeGrafter"/>
</dbReference>
<dbReference type="Gene3D" id="6.10.280.10">
    <property type="entry name" value="Mediator complex, subunit Med21"/>
    <property type="match status" value="1"/>
</dbReference>
<dbReference type="InterPro" id="IPR037212">
    <property type="entry name" value="Med7/Med21-like"/>
</dbReference>
<dbReference type="InterPro" id="IPR021384">
    <property type="entry name" value="Mediator_Med21"/>
</dbReference>
<dbReference type="PANTHER" id="PTHR13381:SF0">
    <property type="entry name" value="MEDIATOR OF RNA POLYMERASE II TRANSCRIPTION SUBUNIT 21"/>
    <property type="match status" value="1"/>
</dbReference>
<dbReference type="PANTHER" id="PTHR13381">
    <property type="entry name" value="RNA POLYMERASE II HOLOENZYME COMPONENT SRB7"/>
    <property type="match status" value="1"/>
</dbReference>
<dbReference type="Pfam" id="PF11221">
    <property type="entry name" value="Med21"/>
    <property type="match status" value="1"/>
</dbReference>
<dbReference type="SUPFAM" id="SSF140718">
    <property type="entry name" value="Mediator hinge subcomplex-like"/>
    <property type="match status" value="1"/>
</dbReference>
<evidence type="ECO:0000250" key="1"/>
<evidence type="ECO:0000255" key="2"/>
<evidence type="ECO:0000256" key="3">
    <source>
        <dbReference type="SAM" id="MobiDB-lite"/>
    </source>
</evidence>
<evidence type="ECO:0000305" key="4"/>
<name>MED21_NEOFI</name>
<feature type="chain" id="PRO_0000305966" description="Mediator of RNA polymerase II transcription subunit 21">
    <location>
        <begin position="1"/>
        <end position="207"/>
    </location>
</feature>
<feature type="region of interest" description="Disordered" evidence="3">
    <location>
        <begin position="37"/>
        <end position="121"/>
    </location>
</feature>
<feature type="coiled-coil region" evidence="2">
    <location>
        <begin position="146"/>
        <end position="196"/>
    </location>
</feature>
<feature type="compositionally biased region" description="Low complexity" evidence="3">
    <location>
        <begin position="65"/>
        <end position="80"/>
    </location>
</feature>
<feature type="compositionally biased region" description="Gly residues" evidence="3">
    <location>
        <begin position="84"/>
        <end position="96"/>
    </location>
</feature>
<feature type="compositionally biased region" description="Low complexity" evidence="3">
    <location>
        <begin position="97"/>
        <end position="108"/>
    </location>
</feature>
<organism>
    <name type="scientific">Neosartorya fischeri (strain ATCC 1020 / DSM 3700 / CBS 544.65 / FGSC A1164 / JCM 1740 / NRRL 181 / WB 181)</name>
    <name type="common">Aspergillus fischerianus</name>
    <dbReference type="NCBI Taxonomy" id="331117"/>
    <lineage>
        <taxon>Eukaryota</taxon>
        <taxon>Fungi</taxon>
        <taxon>Dikarya</taxon>
        <taxon>Ascomycota</taxon>
        <taxon>Pezizomycotina</taxon>
        <taxon>Eurotiomycetes</taxon>
        <taxon>Eurotiomycetidae</taxon>
        <taxon>Eurotiales</taxon>
        <taxon>Aspergillaceae</taxon>
        <taxon>Aspergillus</taxon>
        <taxon>Aspergillus subgen. Fumigati</taxon>
    </lineage>
</organism>
<sequence length="207" mass="22321">MADILTQLQTCLDQLATQFYATIGYLSTYHDNSPAIPHPDVPDAAPALAKIPKNSTAPPVPAGAPVPAQSQASPPAQNPAHGAAGAGTSVGEGGQTPGPAAGAGADPNLPAPDSPRTFASRQRELARDLIIKEQQIEYLISVLPGIDSSEAEQEKRIRELEGELRRVEEERELKMRELKRLRRTLENVLRAVETGLYGDRELLERYS</sequence>
<keyword id="KW-0010">Activator</keyword>
<keyword id="KW-0175">Coiled coil</keyword>
<keyword id="KW-0539">Nucleus</keyword>
<keyword id="KW-1185">Reference proteome</keyword>
<keyword id="KW-0804">Transcription</keyword>
<keyword id="KW-0805">Transcription regulation</keyword>
<protein>
    <recommendedName>
        <fullName>Mediator of RNA polymerase II transcription subunit 21</fullName>
    </recommendedName>
    <alternativeName>
        <fullName>Mediator complex subunit 21</fullName>
    </alternativeName>
</protein>